<reference key="1">
    <citation type="journal article" date="2008" name="J. Bacteriol.">
        <title>The pangenome structure of Escherichia coli: comparative genomic analysis of E. coli commensal and pathogenic isolates.</title>
        <authorList>
            <person name="Rasko D.A."/>
            <person name="Rosovitz M.J."/>
            <person name="Myers G.S.A."/>
            <person name="Mongodin E.F."/>
            <person name="Fricke W.F."/>
            <person name="Gajer P."/>
            <person name="Crabtree J."/>
            <person name="Sebaihia M."/>
            <person name="Thomson N.R."/>
            <person name="Chaudhuri R."/>
            <person name="Henderson I.R."/>
            <person name="Sperandio V."/>
            <person name="Ravel J."/>
        </authorList>
    </citation>
    <scope>NUCLEOTIDE SEQUENCE [LARGE SCALE GENOMIC DNA]</scope>
    <source>
        <strain>E24377A / ETEC</strain>
    </source>
</reference>
<name>PANB_ECO24</name>
<protein>
    <recommendedName>
        <fullName evidence="1">3-methyl-2-oxobutanoate hydroxymethyltransferase</fullName>
        <ecNumber evidence="1">2.1.2.11</ecNumber>
    </recommendedName>
    <alternativeName>
        <fullName evidence="1">Ketopantoate hydroxymethyltransferase</fullName>
        <shortName evidence="1">KPHMT</shortName>
    </alternativeName>
</protein>
<organism>
    <name type="scientific">Escherichia coli O139:H28 (strain E24377A / ETEC)</name>
    <dbReference type="NCBI Taxonomy" id="331111"/>
    <lineage>
        <taxon>Bacteria</taxon>
        <taxon>Pseudomonadati</taxon>
        <taxon>Pseudomonadota</taxon>
        <taxon>Gammaproteobacteria</taxon>
        <taxon>Enterobacterales</taxon>
        <taxon>Enterobacteriaceae</taxon>
        <taxon>Escherichia</taxon>
    </lineage>
</organism>
<keyword id="KW-0963">Cytoplasm</keyword>
<keyword id="KW-0460">Magnesium</keyword>
<keyword id="KW-0479">Metal-binding</keyword>
<keyword id="KW-0566">Pantothenate biosynthesis</keyword>
<keyword id="KW-1185">Reference proteome</keyword>
<keyword id="KW-0808">Transferase</keyword>
<proteinExistence type="inferred from homology"/>
<gene>
    <name evidence="1" type="primary">panB</name>
    <name type="ordered locus">EcE24377A_0137</name>
</gene>
<dbReference type="EC" id="2.1.2.11" evidence="1"/>
<dbReference type="EMBL" id="CP000800">
    <property type="protein sequence ID" value="ABV20645.1"/>
    <property type="molecule type" value="Genomic_DNA"/>
</dbReference>
<dbReference type="RefSeq" id="WP_000805455.1">
    <property type="nucleotide sequence ID" value="NC_009801.1"/>
</dbReference>
<dbReference type="SMR" id="A7ZHM4"/>
<dbReference type="KEGG" id="ecw:EcE24377A_0137"/>
<dbReference type="HOGENOM" id="CLU_036645_1_0_6"/>
<dbReference type="UniPathway" id="UPA00028">
    <property type="reaction ID" value="UER00003"/>
</dbReference>
<dbReference type="Proteomes" id="UP000001122">
    <property type="component" value="Chromosome"/>
</dbReference>
<dbReference type="GO" id="GO:0005737">
    <property type="term" value="C:cytoplasm"/>
    <property type="evidence" value="ECO:0007669"/>
    <property type="project" value="UniProtKB-SubCell"/>
</dbReference>
<dbReference type="GO" id="GO:0003864">
    <property type="term" value="F:3-methyl-2-oxobutanoate hydroxymethyltransferase activity"/>
    <property type="evidence" value="ECO:0007669"/>
    <property type="project" value="UniProtKB-UniRule"/>
</dbReference>
<dbReference type="GO" id="GO:0000287">
    <property type="term" value="F:magnesium ion binding"/>
    <property type="evidence" value="ECO:0007669"/>
    <property type="project" value="TreeGrafter"/>
</dbReference>
<dbReference type="GO" id="GO:0015940">
    <property type="term" value="P:pantothenate biosynthetic process"/>
    <property type="evidence" value="ECO:0007669"/>
    <property type="project" value="UniProtKB-UniRule"/>
</dbReference>
<dbReference type="CDD" id="cd06557">
    <property type="entry name" value="KPHMT-like"/>
    <property type="match status" value="1"/>
</dbReference>
<dbReference type="FunFam" id="3.20.20.60:FF:000003">
    <property type="entry name" value="3-methyl-2-oxobutanoate hydroxymethyltransferase"/>
    <property type="match status" value="1"/>
</dbReference>
<dbReference type="Gene3D" id="3.20.20.60">
    <property type="entry name" value="Phosphoenolpyruvate-binding domains"/>
    <property type="match status" value="1"/>
</dbReference>
<dbReference type="HAMAP" id="MF_00156">
    <property type="entry name" value="PanB"/>
    <property type="match status" value="1"/>
</dbReference>
<dbReference type="InterPro" id="IPR003700">
    <property type="entry name" value="Pantoate_hydroxy_MeTrfase"/>
</dbReference>
<dbReference type="InterPro" id="IPR015813">
    <property type="entry name" value="Pyrv/PenolPyrv_kinase-like_dom"/>
</dbReference>
<dbReference type="InterPro" id="IPR040442">
    <property type="entry name" value="Pyrv_kinase-like_dom_sf"/>
</dbReference>
<dbReference type="NCBIfam" id="TIGR00222">
    <property type="entry name" value="panB"/>
    <property type="match status" value="1"/>
</dbReference>
<dbReference type="NCBIfam" id="NF001452">
    <property type="entry name" value="PRK00311.1"/>
    <property type="match status" value="1"/>
</dbReference>
<dbReference type="PANTHER" id="PTHR20881">
    <property type="entry name" value="3-METHYL-2-OXOBUTANOATE HYDROXYMETHYLTRANSFERASE"/>
    <property type="match status" value="1"/>
</dbReference>
<dbReference type="PANTHER" id="PTHR20881:SF0">
    <property type="entry name" value="3-METHYL-2-OXOBUTANOATE HYDROXYMETHYLTRANSFERASE"/>
    <property type="match status" value="1"/>
</dbReference>
<dbReference type="Pfam" id="PF02548">
    <property type="entry name" value="Pantoate_transf"/>
    <property type="match status" value="1"/>
</dbReference>
<dbReference type="PIRSF" id="PIRSF000388">
    <property type="entry name" value="Pantoate_hydroxy_MeTrfase"/>
    <property type="match status" value="1"/>
</dbReference>
<dbReference type="SUPFAM" id="SSF51621">
    <property type="entry name" value="Phosphoenolpyruvate/pyruvate domain"/>
    <property type="match status" value="1"/>
</dbReference>
<accession>A7ZHM4</accession>
<evidence type="ECO:0000255" key="1">
    <source>
        <dbReference type="HAMAP-Rule" id="MF_00156"/>
    </source>
</evidence>
<comment type="function">
    <text evidence="1">Catalyzes the reversible reaction in which hydroxymethyl group from 5,10-methylenetetrahydrofolate is transferred onto alpha-ketoisovalerate to form ketopantoate.</text>
</comment>
<comment type="catalytic activity">
    <reaction evidence="1">
        <text>3-methyl-2-oxobutanoate + (6R)-5,10-methylene-5,6,7,8-tetrahydrofolate + H2O = 2-dehydropantoate + (6S)-5,6,7,8-tetrahydrofolate</text>
        <dbReference type="Rhea" id="RHEA:11824"/>
        <dbReference type="ChEBI" id="CHEBI:11561"/>
        <dbReference type="ChEBI" id="CHEBI:11851"/>
        <dbReference type="ChEBI" id="CHEBI:15377"/>
        <dbReference type="ChEBI" id="CHEBI:15636"/>
        <dbReference type="ChEBI" id="CHEBI:57453"/>
        <dbReference type="EC" id="2.1.2.11"/>
    </reaction>
</comment>
<comment type="cofactor">
    <cofactor evidence="1">
        <name>Mg(2+)</name>
        <dbReference type="ChEBI" id="CHEBI:18420"/>
    </cofactor>
    <text evidence="1">Binds 1 Mg(2+) ion per subunit.</text>
</comment>
<comment type="pathway">
    <text evidence="1">Cofactor biosynthesis; (R)-pantothenate biosynthesis; (R)-pantoate from 3-methyl-2-oxobutanoate: step 1/2.</text>
</comment>
<comment type="subunit">
    <text evidence="1">Homodecamer; pentamer of dimers.</text>
</comment>
<comment type="subcellular location">
    <subcellularLocation>
        <location evidence="1">Cytoplasm</location>
    </subcellularLocation>
</comment>
<comment type="similarity">
    <text evidence="1">Belongs to the PanB family.</text>
</comment>
<feature type="chain" id="PRO_1000058182" description="3-methyl-2-oxobutanoate hydroxymethyltransferase">
    <location>
        <begin position="1"/>
        <end position="264"/>
    </location>
</feature>
<feature type="active site" description="Proton acceptor" evidence="1">
    <location>
        <position position="181"/>
    </location>
</feature>
<feature type="binding site" evidence="1">
    <location>
        <begin position="45"/>
        <end position="46"/>
    </location>
    <ligand>
        <name>3-methyl-2-oxobutanoate</name>
        <dbReference type="ChEBI" id="CHEBI:11851"/>
    </ligand>
</feature>
<feature type="binding site" evidence="1">
    <location>
        <position position="45"/>
    </location>
    <ligand>
        <name>Mg(2+)</name>
        <dbReference type="ChEBI" id="CHEBI:18420"/>
    </ligand>
</feature>
<feature type="binding site" evidence="1">
    <location>
        <position position="84"/>
    </location>
    <ligand>
        <name>3-methyl-2-oxobutanoate</name>
        <dbReference type="ChEBI" id="CHEBI:11851"/>
    </ligand>
</feature>
<feature type="binding site" evidence="1">
    <location>
        <position position="84"/>
    </location>
    <ligand>
        <name>Mg(2+)</name>
        <dbReference type="ChEBI" id="CHEBI:18420"/>
    </ligand>
</feature>
<feature type="binding site" evidence="1">
    <location>
        <position position="112"/>
    </location>
    <ligand>
        <name>3-methyl-2-oxobutanoate</name>
        <dbReference type="ChEBI" id="CHEBI:11851"/>
    </ligand>
</feature>
<feature type="binding site" evidence="1">
    <location>
        <position position="114"/>
    </location>
    <ligand>
        <name>Mg(2+)</name>
        <dbReference type="ChEBI" id="CHEBI:18420"/>
    </ligand>
</feature>
<sequence length="264" mass="28179">MKPTTIASLQKCKQDKKRFATITAYDYSFAKLFADEGLNVMLVGDSLGMTVQGHDSTLPVTVEDIAYHTAAVRRGAPNCLLLADLPFMAYATPEQAFENAATVMRAGANMVKIEGGEWLVETVKMLTERAVPVCGHLGLTPQSVNIFGGYKVQGRGDEAGDQLLSDALALEAAGAQLLVLECVPVELAKRITEALAIPVIGIGAGNVTDGQILVMHDAFGITGGHIPKFAKNFLAETGDIRAAVRQYMAEVESGVYPGEEHSFH</sequence>